<evidence type="ECO:0000250" key="1"/>
<evidence type="ECO:0000250" key="2">
    <source>
        <dbReference type="UniProtKB" id="O43704"/>
    </source>
</evidence>
<evidence type="ECO:0000269" key="3">
    <source>
    </source>
</evidence>
<evidence type="ECO:0000305" key="4"/>
<evidence type="ECO:0000305" key="5">
    <source>
    </source>
</evidence>
<proteinExistence type="evidence at protein level"/>
<sequence>MGTVDAYLRQPWSTVHAIPMVSAFAQNWERVDNFQSRPDDIVVATFPKSGTTWISEIVDMILQGGDPKKCKRDAIVNRVPMLEFAAPGQMPAGTEQLENMPSPRIIKTHIPADILPKSFWDKSCKMIYVGRNAKDVAVSYYHFDLMNKLHPHPGTWDQYLEAFMAGKVAYGSWFDHVRGYWERRQEHPILYLFYEDMKEDLRREVAKVAQFLGRELTEVALDAIAHHTSFEAMRDNPSTNYSVVPSQLMDHGISPFMRKGITGDWKNHFTVAQSAHFDQYYAQKMAGTDLRFRTHI</sequence>
<dbReference type="EC" id="2.8.2.1" evidence="3"/>
<dbReference type="EMBL" id="AJ494980">
    <property type="protein sequence ID" value="CAD41949.1"/>
    <property type="molecule type" value="mRNA"/>
</dbReference>
<dbReference type="RefSeq" id="NP_989876.1">
    <property type="nucleotide sequence ID" value="NM_204545.2"/>
</dbReference>
<dbReference type="SMR" id="Q8JG30"/>
<dbReference type="FunCoup" id="Q8JG30">
    <property type="interactions" value="13"/>
</dbReference>
<dbReference type="STRING" id="9031.ENSGALP00000019258"/>
<dbReference type="PaxDb" id="9031-ENSGALP00000019258"/>
<dbReference type="GeneID" id="395227"/>
<dbReference type="KEGG" id="gga:395227"/>
<dbReference type="CTD" id="27284"/>
<dbReference type="VEuPathDB" id="HostDB:geneid_395227"/>
<dbReference type="eggNOG" id="KOG1584">
    <property type="taxonomic scope" value="Eukaryota"/>
</dbReference>
<dbReference type="HOGENOM" id="CLU_027239_1_2_1"/>
<dbReference type="InParanoid" id="Q8JG30"/>
<dbReference type="OMA" id="IIYLCRE"/>
<dbReference type="OrthoDB" id="205623at2759"/>
<dbReference type="PhylomeDB" id="Q8JG30"/>
<dbReference type="TreeFam" id="TF321745"/>
<dbReference type="Reactome" id="R-GGA-156584">
    <property type="pathway name" value="Cytosolic sulfonation of small molecules"/>
</dbReference>
<dbReference type="PRO" id="PR:Q8JG30"/>
<dbReference type="Proteomes" id="UP000000539">
    <property type="component" value="Chromosome 4"/>
</dbReference>
<dbReference type="Bgee" id="ENSGALG00000023120">
    <property type="expression patterns" value="Expressed in kidney and 11 other cell types or tissues"/>
</dbReference>
<dbReference type="GO" id="GO:0005737">
    <property type="term" value="C:cytoplasm"/>
    <property type="evidence" value="ECO:0000318"/>
    <property type="project" value="GO_Central"/>
</dbReference>
<dbReference type="GO" id="GO:0004062">
    <property type="term" value="F:aryl sulfotransferase activity"/>
    <property type="evidence" value="ECO:0000314"/>
    <property type="project" value="UniProtKB"/>
</dbReference>
<dbReference type="GO" id="GO:0051923">
    <property type="term" value="P:sulfation"/>
    <property type="evidence" value="ECO:0000314"/>
    <property type="project" value="UniProtKB"/>
</dbReference>
<dbReference type="GO" id="GO:0042403">
    <property type="term" value="P:thyroid hormone metabolic process"/>
    <property type="evidence" value="ECO:0000314"/>
    <property type="project" value="UniProtKB"/>
</dbReference>
<dbReference type="FunFam" id="3.40.50.300:FF:000433">
    <property type="entry name" value="Estrogen sulfotransferase"/>
    <property type="match status" value="1"/>
</dbReference>
<dbReference type="Gene3D" id="3.40.50.300">
    <property type="entry name" value="P-loop containing nucleotide triphosphate hydrolases"/>
    <property type="match status" value="1"/>
</dbReference>
<dbReference type="InterPro" id="IPR027417">
    <property type="entry name" value="P-loop_NTPase"/>
</dbReference>
<dbReference type="InterPro" id="IPR000863">
    <property type="entry name" value="Sulfotransferase_dom"/>
</dbReference>
<dbReference type="PANTHER" id="PTHR11783">
    <property type="entry name" value="SULFOTRANSFERASE SULT"/>
    <property type="match status" value="1"/>
</dbReference>
<dbReference type="Pfam" id="PF00685">
    <property type="entry name" value="Sulfotransfer_1"/>
    <property type="match status" value="1"/>
</dbReference>
<dbReference type="SUPFAM" id="SSF52540">
    <property type="entry name" value="P-loop containing nucleoside triphosphate hydrolases"/>
    <property type="match status" value="1"/>
</dbReference>
<keyword id="KW-0963">Cytoplasm</keyword>
<keyword id="KW-1185">Reference proteome</keyword>
<keyword id="KW-0808">Transferase</keyword>
<feature type="chain" id="PRO_0000085164" description="Sulfotransferase 1B1">
    <location>
        <begin position="1"/>
        <end position="296"/>
    </location>
</feature>
<feature type="active site" description="Proton acceptor" evidence="1">
    <location>
        <position position="109"/>
    </location>
</feature>
<feature type="binding site" evidence="2">
    <location>
        <begin position="48"/>
        <end position="53"/>
    </location>
    <ligand>
        <name>3'-phosphoadenylyl sulfate</name>
        <dbReference type="ChEBI" id="CHEBI:58339"/>
    </ligand>
</feature>
<feature type="binding site" evidence="1">
    <location>
        <begin position="107"/>
        <end position="109"/>
    </location>
    <ligand>
        <name>substrate</name>
    </ligand>
</feature>
<feature type="binding site" evidence="2">
    <location>
        <position position="131"/>
    </location>
    <ligand>
        <name>3'-phosphoadenylyl sulfate</name>
        <dbReference type="ChEBI" id="CHEBI:58339"/>
    </ligand>
</feature>
<feature type="binding site" evidence="2">
    <location>
        <position position="139"/>
    </location>
    <ligand>
        <name>3'-phosphoadenylyl sulfate</name>
        <dbReference type="ChEBI" id="CHEBI:58339"/>
    </ligand>
</feature>
<feature type="binding site" evidence="2">
    <location>
        <position position="194"/>
    </location>
    <ligand>
        <name>3'-phosphoadenylyl sulfate</name>
        <dbReference type="ChEBI" id="CHEBI:58339"/>
    </ligand>
</feature>
<feature type="binding site" evidence="2">
    <location>
        <begin position="228"/>
        <end position="233"/>
    </location>
    <ligand>
        <name>3'-phosphoadenylyl sulfate</name>
        <dbReference type="ChEBI" id="CHEBI:58339"/>
    </ligand>
</feature>
<feature type="binding site" evidence="2">
    <location>
        <begin position="258"/>
        <end position="260"/>
    </location>
    <ligand>
        <name>3'-phosphoadenylyl sulfate</name>
        <dbReference type="ChEBI" id="CHEBI:58339"/>
    </ligand>
</feature>
<organism>
    <name type="scientific">Gallus gallus</name>
    <name type="common">Chicken</name>
    <dbReference type="NCBI Taxonomy" id="9031"/>
    <lineage>
        <taxon>Eukaryota</taxon>
        <taxon>Metazoa</taxon>
        <taxon>Chordata</taxon>
        <taxon>Craniata</taxon>
        <taxon>Vertebrata</taxon>
        <taxon>Euteleostomi</taxon>
        <taxon>Archelosauria</taxon>
        <taxon>Archosauria</taxon>
        <taxon>Dinosauria</taxon>
        <taxon>Saurischia</taxon>
        <taxon>Theropoda</taxon>
        <taxon>Coelurosauria</taxon>
        <taxon>Aves</taxon>
        <taxon>Neognathae</taxon>
        <taxon>Galloanserae</taxon>
        <taxon>Galliformes</taxon>
        <taxon>Phasianidae</taxon>
        <taxon>Phasianinae</taxon>
        <taxon>Gallus</taxon>
    </lineage>
</organism>
<gene>
    <name type="primary">SULT1B1</name>
    <name type="synonym">SULT1B</name>
</gene>
<comment type="function">
    <text evidence="3">Sulfotransferase that utilizes 3'-phospho-5'-adenylyl sulfate (PAPS) as sulfonate donor to catalyze the sulfate conjugation of dopamine, small phenols such as 1-naphthol and p-nitrophenol and thyroid hormones, including 3,3'-diiodothyronine, triidothyronine (T3) and reverse triiodothyronine (rT3).</text>
</comment>
<comment type="catalytic activity">
    <reaction evidence="3">
        <text>a phenol + 3'-phosphoadenylyl sulfate = an aryl sulfate + adenosine 3',5'-bisphosphate + H(+)</text>
        <dbReference type="Rhea" id="RHEA:12164"/>
        <dbReference type="ChEBI" id="CHEBI:15378"/>
        <dbReference type="ChEBI" id="CHEBI:33853"/>
        <dbReference type="ChEBI" id="CHEBI:58339"/>
        <dbReference type="ChEBI" id="CHEBI:58343"/>
        <dbReference type="ChEBI" id="CHEBI:140317"/>
        <dbReference type="EC" id="2.8.2.1"/>
    </reaction>
    <physiologicalReaction direction="left-to-right" evidence="5">
        <dbReference type="Rhea" id="RHEA:12165"/>
    </physiologicalReaction>
</comment>
<comment type="catalytic activity">
    <reaction evidence="3">
        <text>3,3',5-triiodo-L-thyronine + 3'-phosphoadenylyl sulfate = 3,3',5-triiodo-L-thyronine sulfate + adenosine 3',5'-bisphosphate + H(+)</text>
        <dbReference type="Rhea" id="RHEA:67876"/>
        <dbReference type="ChEBI" id="CHEBI:15378"/>
        <dbReference type="ChEBI" id="CHEBI:58339"/>
        <dbReference type="ChEBI" id="CHEBI:58343"/>
        <dbReference type="ChEBI" id="CHEBI:176511"/>
        <dbReference type="ChEBI" id="CHEBI:533015"/>
    </reaction>
    <physiologicalReaction direction="left-to-right" evidence="5">
        <dbReference type="Rhea" id="RHEA:67877"/>
    </physiologicalReaction>
</comment>
<comment type="catalytic activity">
    <reaction evidence="2">
        <text>3,3',5'-triiodo-L-thyronine + 3'-phosphoadenylyl sulfate = 3,3',5'-triiodo-L-thyronine sulfate + adenosine 3',5'-bisphosphate + H(+)</text>
        <dbReference type="Rhea" id="RHEA:67888"/>
        <dbReference type="ChEBI" id="CHEBI:15378"/>
        <dbReference type="ChEBI" id="CHEBI:57261"/>
        <dbReference type="ChEBI" id="CHEBI:58339"/>
        <dbReference type="ChEBI" id="CHEBI:58343"/>
        <dbReference type="ChEBI" id="CHEBI:176513"/>
    </reaction>
    <physiologicalReaction direction="left-to-right" evidence="2">
        <dbReference type="Rhea" id="RHEA:67889"/>
    </physiologicalReaction>
</comment>
<comment type="catalytic activity">
    <reaction evidence="3">
        <text>3,3'-diiodo-L-thyronine + 3'-phosphoadenylyl sulfate = 3,3'-diiodo-L-thyronine sulfate + adenosine 3',5'-bisphosphate + H(+)</text>
        <dbReference type="Rhea" id="RHEA:67892"/>
        <dbReference type="ChEBI" id="CHEBI:15378"/>
        <dbReference type="ChEBI" id="CHEBI:58339"/>
        <dbReference type="ChEBI" id="CHEBI:58343"/>
        <dbReference type="ChEBI" id="CHEBI:176514"/>
        <dbReference type="ChEBI" id="CHEBI:176515"/>
    </reaction>
    <physiologicalReaction direction="left-to-right" evidence="3">
        <dbReference type="Rhea" id="RHEA:67893"/>
    </physiologicalReaction>
</comment>
<comment type="catalytic activity">
    <reaction evidence="2">
        <text>dopamine + 3'-phosphoadenylyl sulfate = dopamine 3-O-sulfate + adenosine 3',5'-bisphosphate + H(+)</text>
        <dbReference type="Rhea" id="RHEA:67880"/>
        <dbReference type="ChEBI" id="CHEBI:15378"/>
        <dbReference type="ChEBI" id="CHEBI:58339"/>
        <dbReference type="ChEBI" id="CHEBI:58343"/>
        <dbReference type="ChEBI" id="CHEBI:59905"/>
        <dbReference type="ChEBI" id="CHEBI:133524"/>
    </reaction>
    <physiologicalReaction direction="left-to-right" evidence="2">
        <dbReference type="Rhea" id="RHEA:67881"/>
    </physiologicalReaction>
</comment>
<comment type="catalytic activity">
    <reaction evidence="2">
        <text>dopamine + 3'-phosphoadenylyl sulfate = dopamine 4-O-sulfate + adenosine 3',5'-bisphosphate + H(+)</text>
        <dbReference type="Rhea" id="RHEA:67884"/>
        <dbReference type="ChEBI" id="CHEBI:15378"/>
        <dbReference type="ChEBI" id="CHEBI:58339"/>
        <dbReference type="ChEBI" id="CHEBI:58343"/>
        <dbReference type="ChEBI" id="CHEBI:59905"/>
        <dbReference type="ChEBI" id="CHEBI:133529"/>
    </reaction>
    <physiologicalReaction direction="left-to-right" evidence="2">
        <dbReference type="Rhea" id="RHEA:67885"/>
    </physiologicalReaction>
</comment>
<comment type="biophysicochemical properties">
    <kinetics>
        <KM evidence="3">5 uM for 2-bromophenol</KM>
        <KM evidence="3">41 uM for 3,3'-diiodo-L-thyronine (T2)</KM>
        <KM evidence="3">67 uM for 3,3',5-triiodo-L-thyronine (T3)</KM>
        <KM evidence="3">22 uM for 3,3',5'-triiodo-L-thyronine (rT3)</KM>
        <KM evidence="3">72 uM for thyroxine</KM>
        <Vmax evidence="3">22.0 nmol/min/mg enzyme with 3,3'-diiodo-L-thyronine as substrate</Vmax>
        <Vmax evidence="3">2.3 nmol/min/mg enzyme with 3,3',5-triiodo-L-thyronine as substrate</Vmax>
        <Vmax evidence="3">0.1 nmol/min/mg enzyme with thyroxyne as substrate</Vmax>
    </kinetics>
</comment>
<comment type="subcellular location">
    <subcellularLocation>
        <location evidence="2">Cytoplasm</location>
    </subcellularLocation>
</comment>
<comment type="similarity">
    <text evidence="4">Belongs to the sulfotransferase 1 family.</text>
</comment>
<reference key="1">
    <citation type="journal article" date="2004" name="Arch. Biochem. Biophys.">
        <title>cDNA cloning, functional expression, and characterization of chicken sulfotransferases belonging to the SULT1B and SULT1C families.</title>
        <authorList>
            <person name="Wilson L.A."/>
            <person name="Reyns G.E."/>
            <person name="Darras V.M."/>
            <person name="Coughtrie M.W.H."/>
        </authorList>
    </citation>
    <scope>NUCLEOTIDE SEQUENCE [MRNA]</scope>
    <scope>CATALYTIC ACTIVITY</scope>
    <scope>FUNCTION</scope>
    <scope>BIOPHYSICOCHEMICAL PROPERTIES</scope>
    <source>
        <tissue>Lymphoid tissue</tissue>
    </source>
</reference>
<protein>
    <recommendedName>
        <fullName>Sulfotransferase 1B1</fullName>
        <shortName>ST1B1</shortName>
        <ecNumber evidence="3">2.8.2.1</ecNumber>
    </recommendedName>
    <alternativeName>
        <fullName>Sulfotransferase family cytosolic 1B member 1</fullName>
    </alternativeName>
</protein>
<accession>Q8JG30</accession>
<name>ST1B1_CHICK</name>